<reference key="1">
    <citation type="journal article" date="2004" name="Proc. Natl. Acad. Sci. U.S.A.">
        <title>Structural flexibility in the Burkholderia mallei genome.</title>
        <authorList>
            <person name="Nierman W.C."/>
            <person name="DeShazer D."/>
            <person name="Kim H.S."/>
            <person name="Tettelin H."/>
            <person name="Nelson K.E."/>
            <person name="Feldblyum T.V."/>
            <person name="Ulrich R.L."/>
            <person name="Ronning C.M."/>
            <person name="Brinkac L.M."/>
            <person name="Daugherty S.C."/>
            <person name="Davidsen T.D."/>
            <person name="DeBoy R.T."/>
            <person name="Dimitrov G."/>
            <person name="Dodson R.J."/>
            <person name="Durkin A.S."/>
            <person name="Gwinn M.L."/>
            <person name="Haft D.H."/>
            <person name="Khouri H.M."/>
            <person name="Kolonay J.F."/>
            <person name="Madupu R."/>
            <person name="Mohammoud Y."/>
            <person name="Nelson W.C."/>
            <person name="Radune D."/>
            <person name="Romero C.M."/>
            <person name="Sarria S."/>
            <person name="Selengut J."/>
            <person name="Shamblin C."/>
            <person name="Sullivan S.A."/>
            <person name="White O."/>
            <person name="Yu Y."/>
            <person name="Zafar N."/>
            <person name="Zhou L."/>
            <person name="Fraser C.M."/>
        </authorList>
    </citation>
    <scope>NUCLEOTIDE SEQUENCE [LARGE SCALE GENOMIC DNA]</scope>
    <source>
        <strain>ATCC 23344</strain>
    </source>
</reference>
<feature type="chain" id="PRO_0000300787" description="Homoserine kinase">
    <location>
        <begin position="1"/>
        <end position="331"/>
    </location>
</feature>
<dbReference type="EC" id="2.7.1.39" evidence="1"/>
<dbReference type="EMBL" id="CP000011">
    <property type="protein sequence ID" value="AAU46180.1"/>
    <property type="molecule type" value="Genomic_DNA"/>
</dbReference>
<dbReference type="RefSeq" id="WP_004190439.1">
    <property type="nucleotide sequence ID" value="NC_006349.2"/>
</dbReference>
<dbReference type="RefSeq" id="YP_105119.1">
    <property type="nucleotide sequence ID" value="NC_006349.2"/>
</dbReference>
<dbReference type="SMR" id="Q62DV9"/>
<dbReference type="KEGG" id="bma:BMAA0307"/>
<dbReference type="PATRIC" id="fig|243160.12.peg.3808"/>
<dbReference type="eggNOG" id="COG2334">
    <property type="taxonomic scope" value="Bacteria"/>
</dbReference>
<dbReference type="HOGENOM" id="CLU_053300_0_0_4"/>
<dbReference type="UniPathway" id="UPA00050">
    <property type="reaction ID" value="UER00064"/>
</dbReference>
<dbReference type="Proteomes" id="UP000006693">
    <property type="component" value="Chromosome 2"/>
</dbReference>
<dbReference type="GO" id="GO:0005524">
    <property type="term" value="F:ATP binding"/>
    <property type="evidence" value="ECO:0007669"/>
    <property type="project" value="UniProtKB-KW"/>
</dbReference>
<dbReference type="GO" id="GO:0004413">
    <property type="term" value="F:homoserine kinase activity"/>
    <property type="evidence" value="ECO:0007669"/>
    <property type="project" value="UniProtKB-UniRule"/>
</dbReference>
<dbReference type="GO" id="GO:0009088">
    <property type="term" value="P:threonine biosynthetic process"/>
    <property type="evidence" value="ECO:0007669"/>
    <property type="project" value="UniProtKB-UniRule"/>
</dbReference>
<dbReference type="CDD" id="cd05153">
    <property type="entry name" value="HomoserineK_II"/>
    <property type="match status" value="1"/>
</dbReference>
<dbReference type="Gene3D" id="3.90.1200.10">
    <property type="match status" value="1"/>
</dbReference>
<dbReference type="Gene3D" id="3.30.200.20">
    <property type="entry name" value="Phosphorylase Kinase, domain 1"/>
    <property type="match status" value="1"/>
</dbReference>
<dbReference type="HAMAP" id="MF_00301">
    <property type="entry name" value="Homoser_kinase_2"/>
    <property type="match status" value="1"/>
</dbReference>
<dbReference type="InterPro" id="IPR002575">
    <property type="entry name" value="Aminoglycoside_PTrfase"/>
</dbReference>
<dbReference type="InterPro" id="IPR005280">
    <property type="entry name" value="Homoserine_kinase_II"/>
</dbReference>
<dbReference type="InterPro" id="IPR011009">
    <property type="entry name" value="Kinase-like_dom_sf"/>
</dbReference>
<dbReference type="InterPro" id="IPR050249">
    <property type="entry name" value="Pseudomonas-type_ThrB"/>
</dbReference>
<dbReference type="NCBIfam" id="NF003558">
    <property type="entry name" value="PRK05231.1"/>
    <property type="match status" value="1"/>
</dbReference>
<dbReference type="NCBIfam" id="TIGR00938">
    <property type="entry name" value="thrB_alt"/>
    <property type="match status" value="1"/>
</dbReference>
<dbReference type="PANTHER" id="PTHR21064:SF6">
    <property type="entry name" value="AMINOGLYCOSIDE PHOSPHOTRANSFERASE DOMAIN-CONTAINING PROTEIN"/>
    <property type="match status" value="1"/>
</dbReference>
<dbReference type="PANTHER" id="PTHR21064">
    <property type="entry name" value="AMINOGLYCOSIDE PHOSPHOTRANSFERASE DOMAIN-CONTAINING PROTEIN-RELATED"/>
    <property type="match status" value="1"/>
</dbReference>
<dbReference type="Pfam" id="PF01636">
    <property type="entry name" value="APH"/>
    <property type="match status" value="1"/>
</dbReference>
<dbReference type="SUPFAM" id="SSF56112">
    <property type="entry name" value="Protein kinase-like (PK-like)"/>
    <property type="match status" value="1"/>
</dbReference>
<evidence type="ECO:0000255" key="1">
    <source>
        <dbReference type="HAMAP-Rule" id="MF_00301"/>
    </source>
</evidence>
<name>KHSE_BURMA</name>
<sequence length="331" mass="36779">MAVFTAVSDADLALWMRHYDLGDVVAFRGIPSGIENSNFFLTTTRGEYVLTIFENLTAGQLPFYVDLMSHLAKHGVPVPAPVARDDGTLFGELHGKPAAIVTKLEGAAQLAPGVEHCVEVGQMLARMHLAGRDYPRHQPNLRSLPWWRDTVPAIAPFVTGEQRALLEGELAHQAAFFASDDYAALPEGPCHCDLFRDNALFAHAEPDTGHSVRLGGFFDFYFAGCDKWLFDVAVTVNDWCVDLPTGALDAARADALLRAYQTVRPFTAGERRRWGDMLRAGAYRFWVSRLYDFHLPRAAQMLKPHDPGHFERILRERIAHAGALPETHACN</sequence>
<proteinExistence type="inferred from homology"/>
<comment type="catalytic activity">
    <reaction evidence="1">
        <text>L-homoserine + ATP = O-phospho-L-homoserine + ADP + H(+)</text>
        <dbReference type="Rhea" id="RHEA:13985"/>
        <dbReference type="ChEBI" id="CHEBI:15378"/>
        <dbReference type="ChEBI" id="CHEBI:30616"/>
        <dbReference type="ChEBI" id="CHEBI:57476"/>
        <dbReference type="ChEBI" id="CHEBI:57590"/>
        <dbReference type="ChEBI" id="CHEBI:456216"/>
        <dbReference type="EC" id="2.7.1.39"/>
    </reaction>
</comment>
<comment type="pathway">
    <text evidence="1">Amino-acid biosynthesis; L-threonine biosynthesis; L-threonine from L-aspartate: step 4/5.</text>
</comment>
<comment type="similarity">
    <text evidence="1">Belongs to the pseudomonas-type ThrB family.</text>
</comment>
<protein>
    <recommendedName>
        <fullName evidence="1">Homoserine kinase</fullName>
        <shortName evidence="1">HK</shortName>
        <shortName evidence="1">HSK</shortName>
        <ecNumber evidence="1">2.7.1.39</ecNumber>
    </recommendedName>
</protein>
<accession>Q62DV9</accession>
<gene>
    <name evidence="1" type="primary">thrB</name>
    <name type="ordered locus">BMAA0307</name>
</gene>
<keyword id="KW-0028">Amino-acid biosynthesis</keyword>
<keyword id="KW-0067">ATP-binding</keyword>
<keyword id="KW-0418">Kinase</keyword>
<keyword id="KW-0547">Nucleotide-binding</keyword>
<keyword id="KW-1185">Reference proteome</keyword>
<keyword id="KW-0791">Threonine biosynthesis</keyword>
<keyword id="KW-0808">Transferase</keyword>
<organism>
    <name type="scientific">Burkholderia mallei (strain ATCC 23344)</name>
    <dbReference type="NCBI Taxonomy" id="243160"/>
    <lineage>
        <taxon>Bacteria</taxon>
        <taxon>Pseudomonadati</taxon>
        <taxon>Pseudomonadota</taxon>
        <taxon>Betaproteobacteria</taxon>
        <taxon>Burkholderiales</taxon>
        <taxon>Burkholderiaceae</taxon>
        <taxon>Burkholderia</taxon>
        <taxon>pseudomallei group</taxon>
    </lineage>
</organism>